<dbReference type="EC" id="6.3.5.2" evidence="1"/>
<dbReference type="EMBL" id="CP000730">
    <property type="protein sequence ID" value="ABX28442.1"/>
    <property type="molecule type" value="Genomic_DNA"/>
</dbReference>
<dbReference type="RefSeq" id="WP_000424966.1">
    <property type="nucleotide sequence ID" value="NC_010079.1"/>
</dbReference>
<dbReference type="SMR" id="A8Z0R1"/>
<dbReference type="MEROPS" id="C26.957"/>
<dbReference type="KEGG" id="sax:USA300HOU_0414"/>
<dbReference type="HOGENOM" id="CLU_014340_0_5_9"/>
<dbReference type="UniPathway" id="UPA00189">
    <property type="reaction ID" value="UER00296"/>
</dbReference>
<dbReference type="GO" id="GO:0005829">
    <property type="term" value="C:cytosol"/>
    <property type="evidence" value="ECO:0007669"/>
    <property type="project" value="TreeGrafter"/>
</dbReference>
<dbReference type="GO" id="GO:0005524">
    <property type="term" value="F:ATP binding"/>
    <property type="evidence" value="ECO:0007669"/>
    <property type="project" value="UniProtKB-UniRule"/>
</dbReference>
<dbReference type="GO" id="GO:0003921">
    <property type="term" value="F:GMP synthase activity"/>
    <property type="evidence" value="ECO:0007669"/>
    <property type="project" value="InterPro"/>
</dbReference>
<dbReference type="CDD" id="cd01742">
    <property type="entry name" value="GATase1_GMP_Synthase"/>
    <property type="match status" value="1"/>
</dbReference>
<dbReference type="CDD" id="cd01997">
    <property type="entry name" value="GMP_synthase_C"/>
    <property type="match status" value="1"/>
</dbReference>
<dbReference type="FunFam" id="3.30.300.10:FF:000002">
    <property type="entry name" value="GMP synthase [glutamine-hydrolyzing]"/>
    <property type="match status" value="1"/>
</dbReference>
<dbReference type="FunFam" id="3.40.50.620:FF:000001">
    <property type="entry name" value="GMP synthase [glutamine-hydrolyzing]"/>
    <property type="match status" value="1"/>
</dbReference>
<dbReference type="FunFam" id="3.40.50.880:FF:000001">
    <property type="entry name" value="GMP synthase [glutamine-hydrolyzing]"/>
    <property type="match status" value="1"/>
</dbReference>
<dbReference type="Gene3D" id="3.30.300.10">
    <property type="match status" value="1"/>
</dbReference>
<dbReference type="Gene3D" id="3.40.50.880">
    <property type="match status" value="1"/>
</dbReference>
<dbReference type="Gene3D" id="3.40.50.620">
    <property type="entry name" value="HUPs"/>
    <property type="match status" value="1"/>
</dbReference>
<dbReference type="HAMAP" id="MF_00344">
    <property type="entry name" value="GMP_synthase"/>
    <property type="match status" value="1"/>
</dbReference>
<dbReference type="InterPro" id="IPR029062">
    <property type="entry name" value="Class_I_gatase-like"/>
</dbReference>
<dbReference type="InterPro" id="IPR017926">
    <property type="entry name" value="GATASE"/>
</dbReference>
<dbReference type="InterPro" id="IPR001674">
    <property type="entry name" value="GMP_synth_C"/>
</dbReference>
<dbReference type="InterPro" id="IPR004739">
    <property type="entry name" value="GMP_synth_GATase"/>
</dbReference>
<dbReference type="InterPro" id="IPR022955">
    <property type="entry name" value="GMP_synthase"/>
</dbReference>
<dbReference type="InterPro" id="IPR025777">
    <property type="entry name" value="GMPS_ATP_PPase_dom"/>
</dbReference>
<dbReference type="InterPro" id="IPR014729">
    <property type="entry name" value="Rossmann-like_a/b/a_fold"/>
</dbReference>
<dbReference type="NCBIfam" id="TIGR00884">
    <property type="entry name" value="guaA_Cterm"/>
    <property type="match status" value="1"/>
</dbReference>
<dbReference type="NCBIfam" id="TIGR00888">
    <property type="entry name" value="guaA_Nterm"/>
    <property type="match status" value="1"/>
</dbReference>
<dbReference type="NCBIfam" id="NF000848">
    <property type="entry name" value="PRK00074.1"/>
    <property type="match status" value="1"/>
</dbReference>
<dbReference type="PANTHER" id="PTHR11922:SF2">
    <property type="entry name" value="GMP SYNTHASE [GLUTAMINE-HYDROLYZING]"/>
    <property type="match status" value="1"/>
</dbReference>
<dbReference type="PANTHER" id="PTHR11922">
    <property type="entry name" value="GMP SYNTHASE-RELATED"/>
    <property type="match status" value="1"/>
</dbReference>
<dbReference type="Pfam" id="PF00117">
    <property type="entry name" value="GATase"/>
    <property type="match status" value="1"/>
</dbReference>
<dbReference type="Pfam" id="PF00958">
    <property type="entry name" value="GMP_synt_C"/>
    <property type="match status" value="1"/>
</dbReference>
<dbReference type="Pfam" id="PF03054">
    <property type="entry name" value="tRNA_Me_trans"/>
    <property type="match status" value="1"/>
</dbReference>
<dbReference type="PRINTS" id="PR00097">
    <property type="entry name" value="ANTSNTHASEII"/>
</dbReference>
<dbReference type="PRINTS" id="PR00099">
    <property type="entry name" value="CPSGATASE"/>
</dbReference>
<dbReference type="PRINTS" id="PR00096">
    <property type="entry name" value="GATASE"/>
</dbReference>
<dbReference type="SUPFAM" id="SSF52402">
    <property type="entry name" value="Adenine nucleotide alpha hydrolases-like"/>
    <property type="match status" value="1"/>
</dbReference>
<dbReference type="SUPFAM" id="SSF52317">
    <property type="entry name" value="Class I glutamine amidotransferase-like"/>
    <property type="match status" value="1"/>
</dbReference>
<dbReference type="SUPFAM" id="SSF54810">
    <property type="entry name" value="GMP synthetase C-terminal dimerisation domain"/>
    <property type="match status" value="1"/>
</dbReference>
<dbReference type="PROSITE" id="PS51273">
    <property type="entry name" value="GATASE_TYPE_1"/>
    <property type="match status" value="1"/>
</dbReference>
<dbReference type="PROSITE" id="PS51553">
    <property type="entry name" value="GMPS_ATP_PPASE"/>
    <property type="match status" value="1"/>
</dbReference>
<keyword id="KW-0067">ATP-binding</keyword>
<keyword id="KW-0315">Glutamine amidotransferase</keyword>
<keyword id="KW-0332">GMP biosynthesis</keyword>
<keyword id="KW-0436">Ligase</keyword>
<keyword id="KW-0547">Nucleotide-binding</keyword>
<keyword id="KW-0658">Purine biosynthesis</keyword>
<name>GUAA_STAAT</name>
<protein>
    <recommendedName>
        <fullName evidence="1">GMP synthase [glutamine-hydrolyzing]</fullName>
        <ecNumber evidence="1">6.3.5.2</ecNumber>
    </recommendedName>
    <alternativeName>
        <fullName evidence="1">GMP synthetase</fullName>
    </alternativeName>
    <alternativeName>
        <fullName evidence="1">Glutamine amidotransferase</fullName>
    </alternativeName>
</protein>
<proteinExistence type="inferred from homology"/>
<gene>
    <name evidence="1" type="primary">guaA</name>
    <name type="ordered locus">USA300HOU_0414</name>
</gene>
<comment type="function">
    <text evidence="1">Catalyzes the synthesis of GMP from XMP.</text>
</comment>
<comment type="catalytic activity">
    <reaction evidence="1">
        <text>XMP + L-glutamine + ATP + H2O = GMP + L-glutamate + AMP + diphosphate + 2 H(+)</text>
        <dbReference type="Rhea" id="RHEA:11680"/>
        <dbReference type="ChEBI" id="CHEBI:15377"/>
        <dbReference type="ChEBI" id="CHEBI:15378"/>
        <dbReference type="ChEBI" id="CHEBI:29985"/>
        <dbReference type="ChEBI" id="CHEBI:30616"/>
        <dbReference type="ChEBI" id="CHEBI:33019"/>
        <dbReference type="ChEBI" id="CHEBI:57464"/>
        <dbReference type="ChEBI" id="CHEBI:58115"/>
        <dbReference type="ChEBI" id="CHEBI:58359"/>
        <dbReference type="ChEBI" id="CHEBI:456215"/>
        <dbReference type="EC" id="6.3.5.2"/>
    </reaction>
</comment>
<comment type="pathway">
    <text evidence="1">Purine metabolism; GMP biosynthesis; GMP from XMP (L-Gln route): step 1/1.</text>
</comment>
<comment type="subunit">
    <text evidence="1">Homodimer.</text>
</comment>
<organism>
    <name type="scientific">Staphylococcus aureus (strain USA300 / TCH1516)</name>
    <dbReference type="NCBI Taxonomy" id="451516"/>
    <lineage>
        <taxon>Bacteria</taxon>
        <taxon>Bacillati</taxon>
        <taxon>Bacillota</taxon>
        <taxon>Bacilli</taxon>
        <taxon>Bacillales</taxon>
        <taxon>Staphylococcaceae</taxon>
        <taxon>Staphylococcus</taxon>
    </lineage>
</organism>
<sequence>MEMAKEQELILVLDFGSQYNQLITRRIREMGVYSELHDHEISIEEIKKMNPKGIILSGGPNSVYEEGSFTIDPEIYNLGIPVLGICYGMQLTTKLLGGKVERANEREYGKAIINAKSDELFAGLPAEQTVWMSHSDKVIEIPEGFEVIADSPSTDYAAIEDKKRRIYGVQFHPEVRHTEYGNDLLNNFVRRVCDCRGQWTMENFIEIEIEKIRQRVGDRRVLCAMSGGVDSSVVAVLLHKAIGDQLTCIFVDHGLLRKGEGDMVMEQFGEGFNMNIIRVNAKDRFMNKLKGVSDPEQKRKIIGNEFVYVFDDEASKLKGVDFLAQGTLYTDVIESGTKTAQTIKSHHNVGGLPEDMEFELIEPINTLFKDEVRKLGIELGIPEHLVWRQPFPGPGLGIRVLGEITEDKLEIVRESDAILRQVIREEGLEREIWQYFTVLPNIQSVGVMGDYRTYDHTVGIRAVTSIDGMTSDFARIDWEVLQKISSRIVNEVDHVNRVVYDITSKPPSTIEWE</sequence>
<feature type="chain" id="PRO_1000120425" description="GMP synthase [glutamine-hydrolyzing]">
    <location>
        <begin position="1"/>
        <end position="513"/>
    </location>
</feature>
<feature type="domain" description="Glutamine amidotransferase type-1" evidence="1">
    <location>
        <begin position="9"/>
        <end position="198"/>
    </location>
</feature>
<feature type="domain" description="GMPS ATP-PPase" evidence="1">
    <location>
        <begin position="199"/>
        <end position="388"/>
    </location>
</feature>
<feature type="active site" description="Nucleophile" evidence="1">
    <location>
        <position position="86"/>
    </location>
</feature>
<feature type="active site" evidence="1">
    <location>
        <position position="172"/>
    </location>
</feature>
<feature type="active site" evidence="1">
    <location>
        <position position="174"/>
    </location>
</feature>
<feature type="binding site" evidence="1">
    <location>
        <begin position="226"/>
        <end position="232"/>
    </location>
    <ligand>
        <name>ATP</name>
        <dbReference type="ChEBI" id="CHEBI:30616"/>
    </ligand>
</feature>
<accession>A8Z0R1</accession>
<evidence type="ECO:0000255" key="1">
    <source>
        <dbReference type="HAMAP-Rule" id="MF_00344"/>
    </source>
</evidence>
<reference key="1">
    <citation type="journal article" date="2007" name="BMC Microbiol.">
        <title>Subtle genetic changes enhance virulence of methicillin resistant and sensitive Staphylococcus aureus.</title>
        <authorList>
            <person name="Highlander S.K."/>
            <person name="Hulten K.G."/>
            <person name="Qin X."/>
            <person name="Jiang H."/>
            <person name="Yerrapragada S."/>
            <person name="Mason E.O. Jr."/>
            <person name="Shang Y."/>
            <person name="Williams T.M."/>
            <person name="Fortunov R.M."/>
            <person name="Liu Y."/>
            <person name="Igboeli O."/>
            <person name="Petrosino J."/>
            <person name="Tirumalai M."/>
            <person name="Uzman A."/>
            <person name="Fox G.E."/>
            <person name="Cardenas A.M."/>
            <person name="Muzny D.M."/>
            <person name="Hemphill L."/>
            <person name="Ding Y."/>
            <person name="Dugan S."/>
            <person name="Blyth P.R."/>
            <person name="Buhay C.J."/>
            <person name="Dinh H.H."/>
            <person name="Hawes A.C."/>
            <person name="Holder M."/>
            <person name="Kovar C.L."/>
            <person name="Lee S.L."/>
            <person name="Liu W."/>
            <person name="Nazareth L.V."/>
            <person name="Wang Q."/>
            <person name="Zhou J."/>
            <person name="Kaplan S.L."/>
            <person name="Weinstock G.M."/>
        </authorList>
    </citation>
    <scope>NUCLEOTIDE SEQUENCE [LARGE SCALE GENOMIC DNA]</scope>
    <source>
        <strain>USA300 / TCH1516</strain>
    </source>
</reference>